<dbReference type="EMBL" id="AE015924">
    <property type="protein sequence ID" value="AAQ65259.1"/>
    <property type="molecule type" value="Genomic_DNA"/>
</dbReference>
<dbReference type="RefSeq" id="WP_004583404.1">
    <property type="nucleotide sequence ID" value="NC_002950.2"/>
</dbReference>
<dbReference type="SMR" id="Q7MXZ1"/>
<dbReference type="STRING" id="242619.PG_0001"/>
<dbReference type="EnsemblBacteria" id="AAQ65259">
    <property type="protein sequence ID" value="AAQ65259"/>
    <property type="gene ID" value="PG_0001"/>
</dbReference>
<dbReference type="GeneID" id="29255261"/>
<dbReference type="KEGG" id="pgi:PG_0001"/>
<dbReference type="eggNOG" id="COG0593">
    <property type="taxonomic scope" value="Bacteria"/>
</dbReference>
<dbReference type="HOGENOM" id="CLU_026910_3_0_10"/>
<dbReference type="Proteomes" id="UP000000588">
    <property type="component" value="Chromosome"/>
</dbReference>
<dbReference type="GO" id="GO:0005737">
    <property type="term" value="C:cytoplasm"/>
    <property type="evidence" value="ECO:0007669"/>
    <property type="project" value="UniProtKB-SubCell"/>
</dbReference>
<dbReference type="GO" id="GO:0005886">
    <property type="term" value="C:plasma membrane"/>
    <property type="evidence" value="ECO:0007669"/>
    <property type="project" value="TreeGrafter"/>
</dbReference>
<dbReference type="GO" id="GO:0005524">
    <property type="term" value="F:ATP binding"/>
    <property type="evidence" value="ECO:0007669"/>
    <property type="project" value="UniProtKB-UniRule"/>
</dbReference>
<dbReference type="GO" id="GO:0016887">
    <property type="term" value="F:ATP hydrolysis activity"/>
    <property type="evidence" value="ECO:0007669"/>
    <property type="project" value="InterPro"/>
</dbReference>
<dbReference type="GO" id="GO:0003688">
    <property type="term" value="F:DNA replication origin binding"/>
    <property type="evidence" value="ECO:0007669"/>
    <property type="project" value="UniProtKB-UniRule"/>
</dbReference>
<dbReference type="GO" id="GO:0008289">
    <property type="term" value="F:lipid binding"/>
    <property type="evidence" value="ECO:0007669"/>
    <property type="project" value="UniProtKB-KW"/>
</dbReference>
<dbReference type="GO" id="GO:0006270">
    <property type="term" value="P:DNA replication initiation"/>
    <property type="evidence" value="ECO:0007669"/>
    <property type="project" value="UniProtKB-UniRule"/>
</dbReference>
<dbReference type="GO" id="GO:0006275">
    <property type="term" value="P:regulation of DNA replication"/>
    <property type="evidence" value="ECO:0007669"/>
    <property type="project" value="UniProtKB-UniRule"/>
</dbReference>
<dbReference type="CDD" id="cd00009">
    <property type="entry name" value="AAA"/>
    <property type="match status" value="1"/>
</dbReference>
<dbReference type="CDD" id="cd06571">
    <property type="entry name" value="Bac_DnaA_C"/>
    <property type="match status" value="1"/>
</dbReference>
<dbReference type="Gene3D" id="1.10.1750.10">
    <property type="match status" value="1"/>
</dbReference>
<dbReference type="Gene3D" id="1.10.8.60">
    <property type="match status" value="1"/>
</dbReference>
<dbReference type="Gene3D" id="3.30.300.180">
    <property type="match status" value="1"/>
</dbReference>
<dbReference type="Gene3D" id="3.40.50.300">
    <property type="entry name" value="P-loop containing nucleotide triphosphate hydrolases"/>
    <property type="match status" value="1"/>
</dbReference>
<dbReference type="HAMAP" id="MF_00377">
    <property type="entry name" value="DnaA_bact"/>
    <property type="match status" value="1"/>
</dbReference>
<dbReference type="InterPro" id="IPR003593">
    <property type="entry name" value="AAA+_ATPase"/>
</dbReference>
<dbReference type="InterPro" id="IPR001957">
    <property type="entry name" value="Chromosome_initiator_DnaA"/>
</dbReference>
<dbReference type="InterPro" id="IPR020591">
    <property type="entry name" value="Chromosome_initiator_DnaA-like"/>
</dbReference>
<dbReference type="InterPro" id="IPR018312">
    <property type="entry name" value="Chromosome_initiator_DnaA_CS"/>
</dbReference>
<dbReference type="InterPro" id="IPR013159">
    <property type="entry name" value="DnaA_C"/>
</dbReference>
<dbReference type="InterPro" id="IPR013317">
    <property type="entry name" value="DnaA_dom"/>
</dbReference>
<dbReference type="InterPro" id="IPR024633">
    <property type="entry name" value="DnaA_N_dom"/>
</dbReference>
<dbReference type="InterPro" id="IPR038454">
    <property type="entry name" value="DnaA_N_sf"/>
</dbReference>
<dbReference type="InterPro" id="IPR027417">
    <property type="entry name" value="P-loop_NTPase"/>
</dbReference>
<dbReference type="InterPro" id="IPR010921">
    <property type="entry name" value="Trp_repressor/repl_initiator"/>
</dbReference>
<dbReference type="NCBIfam" id="TIGR00362">
    <property type="entry name" value="DnaA"/>
    <property type="match status" value="1"/>
</dbReference>
<dbReference type="PANTHER" id="PTHR30050">
    <property type="entry name" value="CHROMOSOMAL REPLICATION INITIATOR PROTEIN DNAA"/>
    <property type="match status" value="1"/>
</dbReference>
<dbReference type="PANTHER" id="PTHR30050:SF2">
    <property type="entry name" value="CHROMOSOMAL REPLICATION INITIATOR PROTEIN DNAA"/>
    <property type="match status" value="1"/>
</dbReference>
<dbReference type="Pfam" id="PF00308">
    <property type="entry name" value="Bac_DnaA"/>
    <property type="match status" value="1"/>
</dbReference>
<dbReference type="Pfam" id="PF08299">
    <property type="entry name" value="Bac_DnaA_C"/>
    <property type="match status" value="1"/>
</dbReference>
<dbReference type="Pfam" id="PF11638">
    <property type="entry name" value="DnaA_N"/>
    <property type="match status" value="1"/>
</dbReference>
<dbReference type="PRINTS" id="PR00051">
    <property type="entry name" value="DNAA"/>
</dbReference>
<dbReference type="SMART" id="SM00382">
    <property type="entry name" value="AAA"/>
    <property type="match status" value="1"/>
</dbReference>
<dbReference type="SMART" id="SM00760">
    <property type="entry name" value="Bac_DnaA_C"/>
    <property type="match status" value="1"/>
</dbReference>
<dbReference type="SUPFAM" id="SSF52540">
    <property type="entry name" value="P-loop containing nucleoside triphosphate hydrolases"/>
    <property type="match status" value="1"/>
</dbReference>
<dbReference type="SUPFAM" id="SSF48295">
    <property type="entry name" value="TrpR-like"/>
    <property type="match status" value="1"/>
</dbReference>
<dbReference type="PROSITE" id="PS01008">
    <property type="entry name" value="DNAA"/>
    <property type="match status" value="1"/>
</dbReference>
<comment type="function">
    <text evidence="1">Plays an essential role in the initiation and regulation of chromosomal replication. ATP-DnaA binds to the origin of replication (oriC) to initiate formation of the DNA replication initiation complex once per cell cycle. Binds the DnaA box (a 9 base pair repeat at the origin) and separates the double-stranded (ds)DNA. Forms a right-handed helical filament on oriC DNA; dsDNA binds to the exterior of the filament while single-stranded (ss)DNA is stabiized in the filament's interior. The ATP-DnaA-oriC complex binds and stabilizes one strand of the AT-rich DNA unwinding element (DUE), permitting loading of DNA polymerase. After initiation quickly degrades to an ADP-DnaA complex that is not apt for DNA replication. Binds acidic phospholipids.</text>
</comment>
<comment type="subunit">
    <text evidence="1">Oligomerizes as a right-handed, spiral filament on DNA at oriC.</text>
</comment>
<comment type="subcellular location">
    <subcellularLocation>
        <location evidence="1">Cytoplasm</location>
    </subcellularLocation>
</comment>
<comment type="domain">
    <text evidence="1">Domain I is involved in oligomerization and binding regulators, domain II is flexibile and of varying length in different bacteria, domain III forms the AAA+ region, while domain IV binds dsDNA.</text>
</comment>
<comment type="similarity">
    <text evidence="1">Belongs to the DnaA family.</text>
</comment>
<organism>
    <name type="scientific">Porphyromonas gingivalis (strain ATCC BAA-308 / W83)</name>
    <dbReference type="NCBI Taxonomy" id="242619"/>
    <lineage>
        <taxon>Bacteria</taxon>
        <taxon>Pseudomonadati</taxon>
        <taxon>Bacteroidota</taxon>
        <taxon>Bacteroidia</taxon>
        <taxon>Bacteroidales</taxon>
        <taxon>Porphyromonadaceae</taxon>
        <taxon>Porphyromonas</taxon>
    </lineage>
</organism>
<gene>
    <name evidence="1" type="primary">dnaA</name>
    <name type="ordered locus">PG_0001</name>
</gene>
<keyword id="KW-0067">ATP-binding</keyword>
<keyword id="KW-0963">Cytoplasm</keyword>
<keyword id="KW-0235">DNA replication</keyword>
<keyword id="KW-0238">DNA-binding</keyword>
<keyword id="KW-0446">Lipid-binding</keyword>
<keyword id="KW-0547">Nucleotide-binding</keyword>
<keyword id="KW-1185">Reference proteome</keyword>
<sequence>MNYHSTNVNEIWDACLRILQDIVDERAYRTWFLPIIPVSIEGDTLTLQVPSQFFCEFLEGNFVEQLRTVLGRVIGPNASLQYNALVDNSSPKYPGTVTLAGCADGGQAAEQFDVNLLHRHMPNAATHSEAQDFDTQLNSRLNFRNFYQSECNYVARSVAEAIAASPGNTPMNPFFIYGASGVGKTHLCHALGLRVREMHPRLKVLYVSSHLFEMQFTTAARMGTINDFIAFYQQVDVLIIDDIQWLIGKKKTQLAFFQVFNHLYMLGKQIVLTSDKPPVDLNGMEERLVTRMAGATCVKIERPDLKLRREILQQRTLQSGVRLDESVLNFIAENVCDNVRELEGTLVSLITNSVVVGKEIDLTFAKRIVRQAVRLEKKEVTIECIQQAVSRVFQVQIEQMKSKSRKQDIVQARQVVMFLSKKHTAQSLSAIGELMGGRNHATVLHGCRCVTNEMEMNASFRSSVERAEQLIAN</sequence>
<proteinExistence type="inferred from homology"/>
<feature type="chain" id="PRO_0000114231" description="Chromosomal replication initiator protein DnaA">
    <location>
        <begin position="1"/>
        <end position="473"/>
    </location>
</feature>
<feature type="region of interest" description="Domain I, interacts with DnaA modulators" evidence="1">
    <location>
        <begin position="1"/>
        <end position="76"/>
    </location>
</feature>
<feature type="region of interest" description="Domain II" evidence="1">
    <location>
        <begin position="76"/>
        <end position="135"/>
    </location>
</feature>
<feature type="region of interest" description="Domain III, AAA+ region" evidence="1">
    <location>
        <begin position="136"/>
        <end position="353"/>
    </location>
</feature>
<feature type="region of interest" description="Domain IV, binds dsDNA" evidence="1">
    <location>
        <begin position="354"/>
        <end position="473"/>
    </location>
</feature>
<feature type="binding site" evidence="1">
    <location>
        <position position="181"/>
    </location>
    <ligand>
        <name>ATP</name>
        <dbReference type="ChEBI" id="CHEBI:30616"/>
    </ligand>
</feature>
<feature type="binding site" evidence="1">
    <location>
        <position position="183"/>
    </location>
    <ligand>
        <name>ATP</name>
        <dbReference type="ChEBI" id="CHEBI:30616"/>
    </ligand>
</feature>
<feature type="binding site" evidence="1">
    <location>
        <position position="184"/>
    </location>
    <ligand>
        <name>ATP</name>
        <dbReference type="ChEBI" id="CHEBI:30616"/>
    </ligand>
</feature>
<feature type="binding site" evidence="1">
    <location>
        <position position="185"/>
    </location>
    <ligand>
        <name>ATP</name>
        <dbReference type="ChEBI" id="CHEBI:30616"/>
    </ligand>
</feature>
<protein>
    <recommendedName>
        <fullName evidence="1">Chromosomal replication initiator protein DnaA</fullName>
    </recommendedName>
</protein>
<reference key="1">
    <citation type="journal article" date="2003" name="J. Bacteriol.">
        <title>Complete genome sequence of the oral pathogenic bacterium Porphyromonas gingivalis strain W83.</title>
        <authorList>
            <person name="Nelson K.E."/>
            <person name="Fleischmann R.D."/>
            <person name="DeBoy R.T."/>
            <person name="Paulsen I.T."/>
            <person name="Fouts D.E."/>
            <person name="Eisen J.A."/>
            <person name="Daugherty S.C."/>
            <person name="Dodson R.J."/>
            <person name="Durkin A.S."/>
            <person name="Gwinn M.L."/>
            <person name="Haft D.H."/>
            <person name="Kolonay J.F."/>
            <person name="Nelson W.C."/>
            <person name="Mason T.M."/>
            <person name="Tallon L."/>
            <person name="Gray J."/>
            <person name="Granger D."/>
            <person name="Tettelin H."/>
            <person name="Dong H."/>
            <person name="Galvin J.L."/>
            <person name="Duncan M.J."/>
            <person name="Dewhirst F.E."/>
            <person name="Fraser C.M."/>
        </authorList>
    </citation>
    <scope>NUCLEOTIDE SEQUENCE [LARGE SCALE GENOMIC DNA]</scope>
    <source>
        <strain>ATCC BAA-308 / W83</strain>
    </source>
</reference>
<name>DNAA_PORGI</name>
<accession>Q7MXZ1</accession>
<evidence type="ECO:0000255" key="1">
    <source>
        <dbReference type="HAMAP-Rule" id="MF_00377"/>
    </source>
</evidence>